<comment type="function">
    <text evidence="11 15">Component of intercellular desmosome junctions (PubMed:34368962). Involved in the interaction of plaque proteins and intermediate filaments mediating cell-cell adhesion (PubMed:19717567).</text>
</comment>
<comment type="subunit">
    <text evidence="7 11 12">Binds to JUP/plakoglobin (PubMed:19759396). Interacts with PKP2 (PubMed:11790773). Interacts with DSC3; there is evidence to suggest that the interaction promotes cell-cell adhesion of keratinocytes (PubMed:19717567).</text>
</comment>
<comment type="subunit">
    <text evidence="14">(Microbial infection) Interacts with Staphylococcus aureus protein SdrD; this interaction increases S.aureus adherence to keratinocytes.</text>
</comment>
<comment type="interaction">
    <interactant intactId="EBI-1045757">
        <id>Q02413</id>
    </interactant>
    <interactant intactId="EBI-2371346">
        <id>Q08554</id>
        <label>DSC1</label>
    </interactant>
    <organismsDiffer>false</organismsDiffer>
    <experiments>2</experiments>
</comment>
<comment type="interaction">
    <interactant intactId="EBI-1045757">
        <id>Q02413</id>
    </interactant>
    <interactant intactId="EBI-355041">
        <id>P15924</id>
        <label>DSP</label>
    </interactant>
    <organismsDiffer>false</organismsDiffer>
    <experiments>2</experiments>
</comment>
<comment type="interaction">
    <interactant intactId="EBI-1045757">
        <id>Q02413</id>
    </interactant>
    <interactant intactId="EBI-702484">
        <id>P14923</id>
        <label>JUP</label>
    </interactant>
    <organismsDiffer>false</organismsDiffer>
    <experiments>2</experiments>
</comment>
<comment type="interaction">
    <interactant intactId="EBI-1045757">
        <id>Q02413</id>
    </interactant>
    <interactant intactId="EBI-2513407">
        <id>Q13835</id>
        <label>PKP1</label>
    </interactant>
    <organismsDiffer>false</organismsDiffer>
    <experiments>2</experiments>
</comment>
<comment type="subcellular location">
    <subcellularLocation>
        <location evidence="11">Cell membrane</location>
        <topology evidence="2">Single-pass type I membrane protein</topology>
    </subcellularLocation>
    <subcellularLocation>
        <location evidence="15">Cell junction</location>
        <location evidence="15">Desmosome</location>
    </subcellularLocation>
    <subcellularLocation>
        <location evidence="15">Cytoplasm</location>
    </subcellularLocation>
    <subcellularLocation>
        <location evidence="15">Nucleus</location>
    </subcellularLocation>
</comment>
<comment type="alternative products">
    <event type="alternative splicing"/>
    <isoform>
        <id>Q02413-1</id>
        <name>1</name>
        <sequence type="displayed"/>
    </isoform>
    <isoform>
        <id>Q02413-2</id>
        <name>2</name>
        <sequence type="described" ref="VSP_055930"/>
    </isoform>
</comment>
<comment type="tissue specificity">
    <text evidence="11">Expressed in all suprabasal layers of the epidermis, with the highest expression seen in the granular layer (at protein level).</text>
</comment>
<comment type="induction">
    <text evidence="15">Protein abundance is reduced via proteasomal degradation in response to P.gingivalis infection of gingival epithelial cells.</text>
</comment>
<comment type="domain">
    <text evidence="1">Three calcium ions are usually bound at the interface of each cadherin domain and rigidify the connections, imparting a strong curvature to the full-length ectodomain.</text>
</comment>
<comment type="disease" evidence="6">
    <disease id="DI-00895">
        <name>Palmoplantar keratoderma 1, striate, focal, or diffuse</name>
        <acronym>PPKS1</acronym>
        <description>A dermatological disorder characterized by thickening of the skin on the palms and soles, and longitudinal hyperkeratotic lesions on the palms, running the length of each finger.</description>
        <dbReference type="MIM" id="148700"/>
    </disease>
    <text>The disease is caused by variants affecting the gene represented in this entry.</text>
</comment>
<comment type="disease" evidence="13">
    <disease id="DI-03968">
        <name>Erythroderma, congenital, with palmoplantar keratoderma, hypotrichosis, and hyper IgE</name>
        <acronym>EPKHE</acronym>
        <description>A syndrome characterized by severe dermatitis, multiple allergies and metabolic wasting. Clinical features include erythroderma, yellowish papules and plaques arranged at the periphery of the palms, along the fingers and over weight-bearing areas of the feet, skin erosions and scaling, and hypotrichosis. Additionally, patients manifest severe food allergies, elevated immunoglobulin E (IgE) levels and recurrent infections with marked metabolic wasting.</description>
        <dbReference type="MIM" id="615508"/>
    </disease>
    <text>The disease is caused by variants affecting the gene represented in this entry.</text>
</comment>
<feature type="signal peptide" evidence="3">
    <location>
        <begin position="1"/>
        <end position="23"/>
    </location>
</feature>
<feature type="propeptide" id="PRO_0000003837" evidence="3">
    <location>
        <begin position="24"/>
        <end position="49"/>
    </location>
</feature>
<feature type="chain" id="PRO_0000003838" description="Desmoglein-1">
    <location>
        <begin position="50"/>
        <end position="1049"/>
    </location>
</feature>
<feature type="topological domain" description="Extracellular" evidence="3">
    <location>
        <begin position="50"/>
        <end position="548"/>
    </location>
</feature>
<feature type="transmembrane region" description="Helical" evidence="3">
    <location>
        <begin position="549"/>
        <end position="569"/>
    </location>
</feature>
<feature type="topological domain" description="Cytoplasmic" evidence="3">
    <location>
        <begin position="570"/>
        <end position="1049"/>
    </location>
</feature>
<feature type="domain" description="Cadherin 1" evidence="4">
    <location>
        <begin position="50"/>
        <end position="158"/>
    </location>
</feature>
<feature type="domain" description="Cadherin 2" evidence="4">
    <location>
        <begin position="159"/>
        <end position="270"/>
    </location>
</feature>
<feature type="domain" description="Cadherin 3" evidence="4">
    <location>
        <begin position="271"/>
        <end position="385"/>
    </location>
</feature>
<feature type="domain" description="Cadherin 4" evidence="4">
    <location>
        <begin position="386"/>
        <end position="497"/>
    </location>
</feature>
<feature type="repeat" description="Desmoglein repeat 1">
    <location>
        <begin position="813"/>
        <end position="839"/>
    </location>
</feature>
<feature type="repeat" description="Desmoglein repeat 2">
    <location>
        <begin position="840"/>
        <end position="869"/>
    </location>
</feature>
<feature type="repeat" description="Desmoglein repeat 3">
    <location>
        <begin position="870"/>
        <end position="899"/>
    </location>
</feature>
<feature type="repeat" description="Desmoglein repeat 4">
    <location>
        <begin position="900"/>
        <end position="927"/>
    </location>
</feature>
<feature type="repeat" description="Desmoglein repeat 5">
    <location>
        <begin position="928"/>
        <end position="956"/>
    </location>
</feature>
<feature type="region of interest" description="Disordered" evidence="5">
    <location>
        <begin position="485"/>
        <end position="534"/>
    </location>
</feature>
<feature type="region of interest" description="Disordered" evidence="5">
    <location>
        <begin position="1014"/>
        <end position="1035"/>
    </location>
</feature>
<feature type="compositionally biased region" description="Polar residues" evidence="5">
    <location>
        <begin position="494"/>
        <end position="508"/>
    </location>
</feature>
<feature type="compositionally biased region" description="Low complexity" evidence="5">
    <location>
        <begin position="509"/>
        <end position="530"/>
    </location>
</feature>
<feature type="compositionally biased region" description="Polar residues" evidence="5">
    <location>
        <begin position="1024"/>
        <end position="1035"/>
    </location>
</feature>
<feature type="modified residue" description="Phosphoserine" evidence="17">
    <location>
        <position position="579"/>
    </location>
</feature>
<feature type="glycosylation site" description="N-linked (GlcNAc...) asparagine" evidence="3">
    <location>
        <position position="36"/>
    </location>
</feature>
<feature type="glycosylation site" description="N-linked (GlcNAc...) asparagine" evidence="8">
    <location>
        <position position="110"/>
    </location>
</feature>
<feature type="glycosylation site" description="N-linked (GlcNAc...) asparagine" evidence="3">
    <location>
        <position position="180"/>
    </location>
</feature>
<feature type="splice variant" id="VSP_055930" description="In isoform 2." evidence="16">
    <location>
        <begin position="1"/>
        <end position="641"/>
    </location>
</feature>
<feature type="sequence variant" id="VAR_060248" description="In dbSNP:rs1426310." evidence="9 10">
    <original>M</original>
    <variation>V</variation>
    <location>
        <position position="11"/>
    </location>
</feature>
<feature type="sequence variant" id="VAR_055573" description="In dbSNP:rs16961655.">
    <original>T</original>
    <variation>S</variation>
    <location>
        <position position="395"/>
    </location>
</feature>
<feature type="sequence variant" id="VAR_024385" description="In dbSNP:rs8091003.">
    <original>N</original>
    <variation>T</variation>
    <location>
        <position position="493"/>
    </location>
</feature>
<feature type="sequence variant" id="VAR_024386" description="In dbSNP:rs8091117.">
    <original>T</original>
    <variation>N</variation>
    <location>
        <position position="498"/>
    </location>
</feature>
<feature type="sequence variant" id="VAR_055574" description="In dbSNP:rs16961689.">
    <original>Y</original>
    <variation>S</variation>
    <location>
        <position position="528"/>
    </location>
</feature>
<feature type="sequence variant" id="VAR_055575" description="In dbSNP:rs34302455.">
    <original>D</original>
    <variation>N</variation>
    <location>
        <position position="538"/>
    </location>
</feature>
<feature type="sequence variant" id="VAR_055576" description="In dbSNP:rs35360042.">
    <original>M</original>
    <variation>I</variation>
    <location>
        <position position="665"/>
    </location>
</feature>
<feature type="sequence variant" id="VAR_055577" description="In dbSNP:rs16961692.">
    <original>L</original>
    <variation>Q</variation>
    <location>
        <position position="821"/>
    </location>
</feature>
<feature type="sequence variant" id="VAR_060249" description="In dbSNP:rs3752094.">
    <original>D</original>
    <variation>N</variation>
    <location>
        <position position="828"/>
    </location>
</feature>
<feature type="sequence variant" id="VAR_020364" description="In dbSNP:rs3752095.">
    <original>Y</original>
    <variation>F</variation>
    <location>
        <position position="841"/>
    </location>
</feature>
<organism>
    <name type="scientific">Homo sapiens</name>
    <name type="common">Human</name>
    <dbReference type="NCBI Taxonomy" id="9606"/>
    <lineage>
        <taxon>Eukaryota</taxon>
        <taxon>Metazoa</taxon>
        <taxon>Chordata</taxon>
        <taxon>Craniata</taxon>
        <taxon>Vertebrata</taxon>
        <taxon>Euteleostomi</taxon>
        <taxon>Mammalia</taxon>
        <taxon>Eutheria</taxon>
        <taxon>Euarchontoglires</taxon>
        <taxon>Primates</taxon>
        <taxon>Haplorrhini</taxon>
        <taxon>Catarrhini</taxon>
        <taxon>Hominidae</taxon>
        <taxon>Homo</taxon>
    </lineage>
</organism>
<gene>
    <name type="primary">DSG1</name>
    <name type="synonym">CDHF4</name>
</gene>
<keyword id="KW-0025">Alternative splicing</keyword>
<keyword id="KW-0106">Calcium</keyword>
<keyword id="KW-0130">Cell adhesion</keyword>
<keyword id="KW-0965">Cell junction</keyword>
<keyword id="KW-1003">Cell membrane</keyword>
<keyword id="KW-0165">Cleavage on pair of basic residues</keyword>
<keyword id="KW-0963">Cytoplasm</keyword>
<keyword id="KW-0325">Glycoprotein</keyword>
<keyword id="KW-1063">Hypotrichosis</keyword>
<keyword id="KW-0472">Membrane</keyword>
<keyword id="KW-0479">Metal-binding</keyword>
<keyword id="KW-0539">Nucleus</keyword>
<keyword id="KW-1007">Palmoplantar keratoderma</keyword>
<keyword id="KW-0597">Phosphoprotein</keyword>
<keyword id="KW-1267">Proteomics identification</keyword>
<keyword id="KW-1185">Reference proteome</keyword>
<keyword id="KW-0677">Repeat</keyword>
<keyword id="KW-0732">Signal</keyword>
<keyword id="KW-0812">Transmembrane</keyword>
<keyword id="KW-1133">Transmembrane helix</keyword>
<evidence type="ECO:0000250" key="1"/>
<evidence type="ECO:0000250" key="2">
    <source>
        <dbReference type="UniProtKB" id="Q7TSF1"/>
    </source>
</evidence>
<evidence type="ECO:0000255" key="3"/>
<evidence type="ECO:0000255" key="4">
    <source>
        <dbReference type="PROSITE-ProRule" id="PRU00043"/>
    </source>
</evidence>
<evidence type="ECO:0000256" key="5">
    <source>
        <dbReference type="SAM" id="MobiDB-lite"/>
    </source>
</evidence>
<evidence type="ECO:0000269" key="6">
    <source>
    </source>
</evidence>
<evidence type="ECO:0000269" key="7">
    <source>
    </source>
</evidence>
<evidence type="ECO:0000269" key="8">
    <source>
    </source>
</evidence>
<evidence type="ECO:0000269" key="9">
    <source>
    </source>
</evidence>
<evidence type="ECO:0000269" key="10">
    <source>
    </source>
</evidence>
<evidence type="ECO:0000269" key="11">
    <source>
    </source>
</evidence>
<evidence type="ECO:0000269" key="12">
    <source>
    </source>
</evidence>
<evidence type="ECO:0000269" key="13">
    <source>
    </source>
</evidence>
<evidence type="ECO:0000269" key="14">
    <source>
    </source>
</evidence>
<evidence type="ECO:0000269" key="15">
    <source>
    </source>
</evidence>
<evidence type="ECO:0000303" key="16">
    <source>
    </source>
</evidence>
<evidence type="ECO:0007744" key="17">
    <source>
    </source>
</evidence>
<reference key="1">
    <citation type="journal article" date="1991" name="Proc. Natl. Acad. Sci. U.S.A.">
        <title>Desmosomal glycoprotein DGI, a component of intercellular desmosome junctions, is related to the cadherin family of cell adhesion molecules.</title>
        <authorList>
            <person name="Wheeler G.N."/>
            <person name="Parker A.E."/>
            <person name="Thomas C.L."/>
            <person name="Ataliotis P."/>
            <person name="Poynter D."/>
            <person name="Arnemann J."/>
            <person name="Rutman A.J."/>
            <person name="Pidsley S.C."/>
            <person name="Watt F.M."/>
            <person name="Rees D.A."/>
            <person name="Buxton R.S."/>
            <person name="Magee A.I."/>
        </authorList>
    </citation>
    <scope>NUCLEOTIDE SEQUENCE [MRNA] (ISOFORM 1)</scope>
    <scope>VARIANT VAL-11</scope>
    <source>
        <tissue>Keratinocyte</tissue>
    </source>
</reference>
<reference key="2">
    <citation type="journal article" date="1991" name="J. Cell Sci.">
        <title>Structural analysis and expression of human desmoglein: a cadherin-like component of the desmosome.</title>
        <authorList>
            <person name="Nilles L.A."/>
            <person name="Parry D.A."/>
            <person name="Powers E.E."/>
            <person name="Angst B.D."/>
            <person name="Wagner R.M."/>
            <person name="Green K.J."/>
        </authorList>
    </citation>
    <scope>NUCLEOTIDE SEQUENCE [MRNA] (ISOFORM 1)</scope>
    <scope>VARIANT VAL-11</scope>
    <source>
        <tissue>Foreskin</tissue>
    </source>
</reference>
<reference key="3">
    <citation type="journal article" date="2004" name="Nat. Genet.">
        <title>Complete sequencing and characterization of 21,243 full-length human cDNAs.</title>
        <authorList>
            <person name="Ota T."/>
            <person name="Suzuki Y."/>
            <person name="Nishikawa T."/>
            <person name="Otsuki T."/>
            <person name="Sugiyama T."/>
            <person name="Irie R."/>
            <person name="Wakamatsu A."/>
            <person name="Hayashi K."/>
            <person name="Sato H."/>
            <person name="Nagai K."/>
            <person name="Kimura K."/>
            <person name="Makita H."/>
            <person name="Sekine M."/>
            <person name="Obayashi M."/>
            <person name="Nishi T."/>
            <person name="Shibahara T."/>
            <person name="Tanaka T."/>
            <person name="Ishii S."/>
            <person name="Yamamoto J."/>
            <person name="Saito K."/>
            <person name="Kawai Y."/>
            <person name="Isono Y."/>
            <person name="Nakamura Y."/>
            <person name="Nagahari K."/>
            <person name="Murakami K."/>
            <person name="Yasuda T."/>
            <person name="Iwayanagi T."/>
            <person name="Wagatsuma M."/>
            <person name="Shiratori A."/>
            <person name="Sudo H."/>
            <person name="Hosoiri T."/>
            <person name="Kaku Y."/>
            <person name="Kodaira H."/>
            <person name="Kondo H."/>
            <person name="Sugawara M."/>
            <person name="Takahashi M."/>
            <person name="Kanda K."/>
            <person name="Yokoi T."/>
            <person name="Furuya T."/>
            <person name="Kikkawa E."/>
            <person name="Omura Y."/>
            <person name="Abe K."/>
            <person name="Kamihara K."/>
            <person name="Katsuta N."/>
            <person name="Sato K."/>
            <person name="Tanikawa M."/>
            <person name="Yamazaki M."/>
            <person name="Ninomiya K."/>
            <person name="Ishibashi T."/>
            <person name="Yamashita H."/>
            <person name="Murakawa K."/>
            <person name="Fujimori K."/>
            <person name="Tanai H."/>
            <person name="Kimata M."/>
            <person name="Watanabe M."/>
            <person name="Hiraoka S."/>
            <person name="Chiba Y."/>
            <person name="Ishida S."/>
            <person name="Ono Y."/>
            <person name="Takiguchi S."/>
            <person name="Watanabe S."/>
            <person name="Yosida M."/>
            <person name="Hotuta T."/>
            <person name="Kusano J."/>
            <person name="Kanehori K."/>
            <person name="Takahashi-Fujii A."/>
            <person name="Hara H."/>
            <person name="Tanase T.-O."/>
            <person name="Nomura Y."/>
            <person name="Togiya S."/>
            <person name="Komai F."/>
            <person name="Hara R."/>
            <person name="Takeuchi K."/>
            <person name="Arita M."/>
            <person name="Imose N."/>
            <person name="Musashino K."/>
            <person name="Yuuki H."/>
            <person name="Oshima A."/>
            <person name="Sasaki N."/>
            <person name="Aotsuka S."/>
            <person name="Yoshikawa Y."/>
            <person name="Matsunawa H."/>
            <person name="Ichihara T."/>
            <person name="Shiohata N."/>
            <person name="Sano S."/>
            <person name="Moriya S."/>
            <person name="Momiyama H."/>
            <person name="Satoh N."/>
            <person name="Takami S."/>
            <person name="Terashima Y."/>
            <person name="Suzuki O."/>
            <person name="Nakagawa S."/>
            <person name="Senoh A."/>
            <person name="Mizoguchi H."/>
            <person name="Goto Y."/>
            <person name="Shimizu F."/>
            <person name="Wakebe H."/>
            <person name="Hishigaki H."/>
            <person name="Watanabe T."/>
            <person name="Sugiyama A."/>
            <person name="Takemoto M."/>
            <person name="Kawakami B."/>
            <person name="Yamazaki M."/>
            <person name="Watanabe K."/>
            <person name="Kumagai A."/>
            <person name="Itakura S."/>
            <person name="Fukuzumi Y."/>
            <person name="Fujimori Y."/>
            <person name="Komiyama M."/>
            <person name="Tashiro H."/>
            <person name="Tanigami A."/>
            <person name="Fujiwara T."/>
            <person name="Ono T."/>
            <person name="Yamada K."/>
            <person name="Fujii Y."/>
            <person name="Ozaki K."/>
            <person name="Hirao M."/>
            <person name="Ohmori Y."/>
            <person name="Kawabata A."/>
            <person name="Hikiji T."/>
            <person name="Kobatake N."/>
            <person name="Inagaki H."/>
            <person name="Ikema Y."/>
            <person name="Okamoto S."/>
            <person name="Okitani R."/>
            <person name="Kawakami T."/>
            <person name="Noguchi S."/>
            <person name="Itoh T."/>
            <person name="Shigeta K."/>
            <person name="Senba T."/>
            <person name="Matsumura K."/>
            <person name="Nakajima Y."/>
            <person name="Mizuno T."/>
            <person name="Morinaga M."/>
            <person name="Sasaki M."/>
            <person name="Togashi T."/>
            <person name="Oyama M."/>
            <person name="Hata H."/>
            <person name="Watanabe M."/>
            <person name="Komatsu T."/>
            <person name="Mizushima-Sugano J."/>
            <person name="Satoh T."/>
            <person name="Shirai Y."/>
            <person name="Takahashi Y."/>
            <person name="Nakagawa K."/>
            <person name="Okumura K."/>
            <person name="Nagase T."/>
            <person name="Nomura N."/>
            <person name="Kikuchi H."/>
            <person name="Masuho Y."/>
            <person name="Yamashita R."/>
            <person name="Nakai K."/>
            <person name="Yada T."/>
            <person name="Nakamura Y."/>
            <person name="Ohara O."/>
            <person name="Isogai T."/>
            <person name="Sugano S."/>
        </authorList>
    </citation>
    <scope>NUCLEOTIDE SEQUENCE [LARGE SCALE MRNA] (ISOFORM 2)</scope>
    <source>
        <tissue>Testis</tissue>
    </source>
</reference>
<reference key="4">
    <citation type="journal article" date="2005" name="Nature">
        <title>DNA sequence and analysis of human chromosome 18.</title>
        <authorList>
            <person name="Nusbaum C."/>
            <person name="Zody M.C."/>
            <person name="Borowsky M.L."/>
            <person name="Kamal M."/>
            <person name="Kodira C.D."/>
            <person name="Taylor T.D."/>
            <person name="Whittaker C.A."/>
            <person name="Chang J.L."/>
            <person name="Cuomo C.A."/>
            <person name="Dewar K."/>
            <person name="FitzGerald M.G."/>
            <person name="Yang X."/>
            <person name="Abouelleil A."/>
            <person name="Allen N.R."/>
            <person name="Anderson S."/>
            <person name="Bloom T."/>
            <person name="Bugalter B."/>
            <person name="Butler J."/>
            <person name="Cook A."/>
            <person name="DeCaprio D."/>
            <person name="Engels R."/>
            <person name="Garber M."/>
            <person name="Gnirke A."/>
            <person name="Hafez N."/>
            <person name="Hall J.L."/>
            <person name="Norman C.H."/>
            <person name="Itoh T."/>
            <person name="Jaffe D.B."/>
            <person name="Kuroki Y."/>
            <person name="Lehoczky J."/>
            <person name="Lui A."/>
            <person name="Macdonald P."/>
            <person name="Mauceli E."/>
            <person name="Mikkelsen T.S."/>
            <person name="Naylor J.W."/>
            <person name="Nicol R."/>
            <person name="Nguyen C."/>
            <person name="Noguchi H."/>
            <person name="O'Leary S.B."/>
            <person name="Piqani B."/>
            <person name="Smith C.L."/>
            <person name="Talamas J.A."/>
            <person name="Topham K."/>
            <person name="Totoki Y."/>
            <person name="Toyoda A."/>
            <person name="Wain H.M."/>
            <person name="Young S.K."/>
            <person name="Zeng Q."/>
            <person name="Zimmer A.R."/>
            <person name="Fujiyama A."/>
            <person name="Hattori M."/>
            <person name="Birren B.W."/>
            <person name="Sakaki Y."/>
            <person name="Lander E.S."/>
        </authorList>
    </citation>
    <scope>NUCLEOTIDE SEQUENCE [LARGE SCALE GENOMIC DNA]</scope>
</reference>
<reference key="5">
    <citation type="journal article" date="1999" name="Hum. Mol. Genet.">
        <title>N-terminal deletion in a desmosomal cadherin causes the autosomal dominant skin disease striate palmoplantar keratoderma.</title>
        <authorList>
            <person name="Rickman L."/>
            <person name="Simrak D."/>
            <person name="Stevens H.P."/>
            <person name="Hunt D.M."/>
            <person name="King I.A."/>
            <person name="Bryant S.P."/>
            <person name="Eady R.A.J."/>
            <person name="Leigh I.M."/>
            <person name="Arnemann J."/>
            <person name="Magee A.I."/>
            <person name="Kelsell D.P."/>
            <person name="Buxton R.S."/>
        </authorList>
    </citation>
    <scope>INVOLVEMENT IN PPKS1</scope>
</reference>
<reference key="6">
    <citation type="journal article" date="2002" name="J. Biol. Chem.">
        <title>Protein binding and functional characterization of plakophilin 2. Evidence for its diverse roles in desmosomes and beta -catenin signaling.</title>
        <authorList>
            <person name="Chen X."/>
            <person name="Bonne S."/>
            <person name="Hatzfeld M."/>
            <person name="van Roy F."/>
            <person name="Green K.J."/>
        </authorList>
    </citation>
    <scope>INTERACTION WITH PKP2</scope>
</reference>
<reference key="7">
    <citation type="journal article" date="2006" name="J. Proteome Res.">
        <title>Identification of N-linked glycoproteins in human saliva by glycoprotein capture and mass spectrometry.</title>
        <authorList>
            <person name="Ramachandran P."/>
            <person name="Boontheung P."/>
            <person name="Xie Y."/>
            <person name="Sondej M."/>
            <person name="Wong D.T."/>
            <person name="Loo J.A."/>
        </authorList>
    </citation>
    <scope>GLYCOSYLATION [LARGE SCALE ANALYSIS] AT ASN-110</scope>
    <source>
        <tissue>Saliva</tissue>
    </source>
</reference>
<reference key="8">
    <citation type="journal article" date="2009" name="J. Biol. Chem.">
        <title>Interactions of plakoglobin and beta-catenin with desmosomal cadherins: basis of selective exclusion of alpha- and beta-catenin from desmosomes.</title>
        <authorList>
            <person name="Choi H.J."/>
            <person name="Gross J.C."/>
            <person name="Pokutta S."/>
            <person name="Weis W.I."/>
        </authorList>
    </citation>
    <scope>INTERACTION WITH JUP/PLAKOGLOBIN</scope>
</reference>
<reference key="9">
    <citation type="journal article" date="2009" name="J. Biol. Chem.">
        <title>Desmocollin 3-mediated binding is crucial for keratinocyte cohesion and is impaired in pemphigus.</title>
        <authorList>
            <person name="Spindler V."/>
            <person name="Heupel W.M."/>
            <person name="Efthymiadis A."/>
            <person name="Schmidt E."/>
            <person name="Eming R."/>
            <person name="Rankl C."/>
            <person name="Hinterdorfer P."/>
            <person name="Mueller T."/>
            <person name="Drenckhahn D."/>
            <person name="Waschke J."/>
        </authorList>
    </citation>
    <scope>FUNCTION</scope>
    <scope>INTERACTION WITH DSC3</scope>
    <scope>SUBCELLULAR LOCATION</scope>
    <scope>TISSUE SPECIFICITY</scope>
</reference>
<reference key="10">
    <citation type="journal article" date="2010" name="Sci. Signal.">
        <title>Quantitative phosphoproteomics reveals widespread full phosphorylation site occupancy during mitosis.</title>
        <authorList>
            <person name="Olsen J.V."/>
            <person name="Vermeulen M."/>
            <person name="Santamaria A."/>
            <person name="Kumar C."/>
            <person name="Miller M.L."/>
            <person name="Jensen L.J."/>
            <person name="Gnad F."/>
            <person name="Cox J."/>
            <person name="Jensen T.S."/>
            <person name="Nigg E.A."/>
            <person name="Brunak S."/>
            <person name="Mann M."/>
        </authorList>
    </citation>
    <scope>PHOSPHORYLATION [LARGE SCALE ANALYSIS] AT SER-579</scope>
    <scope>IDENTIFICATION BY MASS SPECTROMETRY [LARGE SCALE ANALYSIS]</scope>
    <source>
        <tissue>Cervix carcinoma</tissue>
    </source>
</reference>
<reference key="11">
    <citation type="journal article" date="2011" name="BMC Syst. Biol.">
        <title>Initial characterization of the human central proteome.</title>
        <authorList>
            <person name="Burkard T.R."/>
            <person name="Planyavsky M."/>
            <person name="Kaupe I."/>
            <person name="Breitwieser F.P."/>
            <person name="Buerckstuemmer T."/>
            <person name="Bennett K.L."/>
            <person name="Superti-Furga G."/>
            <person name="Colinge J."/>
        </authorList>
    </citation>
    <scope>IDENTIFICATION BY MASS SPECTROMETRY [LARGE SCALE ANALYSIS]</scope>
</reference>
<reference key="12">
    <citation type="journal article" date="2013" name="Nat. Genet.">
        <title>Desmoglein 1 deficiency results in severe dermatitis, multiple allergies and metabolic wasting.</title>
        <authorList>
            <person name="Samuelov L."/>
            <person name="Sarig O."/>
            <person name="Harmon R.M."/>
            <person name="Rapaport D."/>
            <person name="Ishida-Yamamoto A."/>
            <person name="Isakov O."/>
            <person name="Koetsier J.L."/>
            <person name="Gat A."/>
            <person name="Goldberg I."/>
            <person name="Bergman R."/>
            <person name="Spiegel R."/>
            <person name="Eytan O."/>
            <person name="Geller S."/>
            <person name="Peleg S."/>
            <person name="Shomron N."/>
            <person name="Goh C.S."/>
            <person name="Wilson N.J."/>
            <person name="Smith F.J."/>
            <person name="Pohler E."/>
            <person name="Simpson M.A."/>
            <person name="McLean W.H."/>
            <person name="Irvine A.D."/>
            <person name="Horowitz M."/>
            <person name="McGrath J.A."/>
            <person name="Green K.J."/>
            <person name="Sprecher E."/>
        </authorList>
    </citation>
    <scope>INVOLVEMENT IN EPKHE</scope>
</reference>
<reference key="13">
    <citation type="journal article" date="2016" name="Sci. Rep.">
        <title>The interaction between Staphylococcus aureus SdrD and desmoglein 1 is important for adhesion to host cells.</title>
        <authorList>
            <person name="Askarian F."/>
            <person name="Ajayi C."/>
            <person name="Hanssen A.M."/>
            <person name="van Sorge N.M."/>
            <person name="Pettersen I."/>
            <person name="Diep D.B."/>
            <person name="Sollid J.U."/>
            <person name="Johannessen M."/>
        </authorList>
    </citation>
    <scope>INTERACTION WITH STAPHYLOCOCCUS AUREUS PROTEIN SDRD (MICROBIAL INFECTION)</scope>
</reference>
<reference key="14">
    <citation type="journal article" date="2021" name="J. Periodont. Res.">
        <title>Impaired function of epithelial plakophilin-2 is associated with periodontal disease.</title>
        <authorList>
            <person name="Yu N."/>
            <person name="Zhang J."/>
            <person name="Phillips S.T."/>
            <person name="Offenbacher S."/>
            <person name="Zhang S."/>
        </authorList>
    </citation>
    <scope>FUNCTION</scope>
    <scope>SUBCELLULAR LOCATION</scope>
    <scope>INDUCTION BY P.GINGIVALIS INFECTION</scope>
</reference>
<sequence length="1049" mass="113748">MDWSFFRVVAMLFIFLVVVEVNSEFRIQVRDYNTKNGTIKWHSIRRQKREWIKFAAACREGEDNSKRNPIAKIHSDCAANQQVTYRISGVGIDQPPYGIFVINQKTGEINITSIVDREVTPFFIIYCRALNSMGQDLERPLELRVRVLDINDNPPVFSMATFAGQIEENSNANTLVMILNATDADEPNNLNSKIAFKIIRQEPSDSPMFIINRNTGEIRTMNNFLDREQYGQYALAVRGSDRDGGADGMSAECECNIKILDVNDNIPYMEQSSYTIEIQENTLNSNLLEIRVIDLDEEFSANWMAVIFFISGNEGNWFEIEMNERTNVGILKVVKPLDYEAMQSLQLSIGVRNKAEFHHSIMSQYKLKASAISVTVLNVIEGPVFRPGSKTYVVTGNMGSNDKVGDFVATDLDTGRPSTTVRYVMGNNPADLLAVDSRTGKLTLKNKVTKEQYNMLGGKYQGTILSIDDNLQRTCTGTININIQSFGNDDRTNTEPNTKITTNTGRQESTSSTNYDTSTTSTDSSQVYSSEPGNGAKDLLSDNVHFGPAGIGLLIMGFLVLGLVPFLMICCDCGGAPRSAAGFEPVPECSDGAIHSWAVEGPQPEPRDITTVIPQIPPDNANIIECIDNSGVYTNEYGGREMQDLGGGERMTGFELTEGVKTSGMPEICQEYSGTLRRNSMRECREGGLNMNFMESYFCQKAYAYADEDEGRPSNDCLLIYDIEGVGSPAGSVGCCSFIGEDLDDSFLDTLGPKFKKLADISLGKESYPDLDPSWPPQSTEPVCLPQETEPVVSGHPPISPHFGTTTVISESTYPSGPGVLHPKPILDPLGYGNVTVTESYTTSDTLKPSVHVHDNRPASNVVVTERVVGPISGADLHGMLEMPDLRDGSNVIVTERVIAPSSSLPTSLTIHHPRESSNVVVTERVIQPTSGMIGSLSMHPELANAHNVIVTERVVSGAGVTGISGTTGISGGIGSSGLVGTSMGAGSGALSGAGISGGGIGLSSLGGTASIGHMRSSSDHHFNQTIGSASPSTARSRITKYSTVQYSK</sequence>
<protein>
    <recommendedName>
        <fullName>Desmoglein-1</fullName>
    </recommendedName>
    <alternativeName>
        <fullName>Cadherin family member 4</fullName>
    </alternativeName>
    <alternativeName>
        <fullName>Desmosomal glycoprotein 1</fullName>
        <shortName>DG1</shortName>
        <shortName>DGI</shortName>
    </alternativeName>
    <alternativeName>
        <fullName>Pemphigus foliaceus antigen</fullName>
    </alternativeName>
</protein>
<accession>Q02413</accession>
<accession>B7Z845</accession>
<dbReference type="EMBL" id="X56654">
    <property type="protein sequence ID" value="CAA39976.1"/>
    <property type="molecule type" value="mRNA"/>
</dbReference>
<dbReference type="EMBL" id="AF097935">
    <property type="protein sequence ID" value="AAC83817.1"/>
    <property type="molecule type" value="mRNA"/>
</dbReference>
<dbReference type="EMBL" id="AK302888">
    <property type="protein sequence ID" value="BAH13831.1"/>
    <property type="molecule type" value="mRNA"/>
</dbReference>
<dbReference type="EMBL" id="AC009717">
    <property type="status" value="NOT_ANNOTATED_CDS"/>
    <property type="molecule type" value="Genomic_DNA"/>
</dbReference>
<dbReference type="CCDS" id="CCDS11896.1">
    <molecule id="Q02413-1"/>
</dbReference>
<dbReference type="PIR" id="S16906">
    <property type="entry name" value="IJHUG1"/>
</dbReference>
<dbReference type="RefSeq" id="NP_001933.2">
    <molecule id="Q02413-1"/>
    <property type="nucleotide sequence ID" value="NM_001942.4"/>
</dbReference>
<dbReference type="SMR" id="Q02413"/>
<dbReference type="BioGRID" id="108162">
    <property type="interactions" value="216"/>
</dbReference>
<dbReference type="ELM" id="Q02413"/>
<dbReference type="FunCoup" id="Q02413">
    <property type="interactions" value="554"/>
</dbReference>
<dbReference type="IntAct" id="Q02413">
    <property type="interactions" value="79"/>
</dbReference>
<dbReference type="MINT" id="Q02413"/>
<dbReference type="STRING" id="9606.ENSP00000257192"/>
<dbReference type="GlyCosmos" id="Q02413">
    <property type="glycosylation" value="3 sites, No reported glycans"/>
</dbReference>
<dbReference type="GlyGen" id="Q02413">
    <property type="glycosylation" value="6 sites, 1 N-linked glycan (1 site), 1 O-linked glycan (2 sites)"/>
</dbReference>
<dbReference type="iPTMnet" id="Q02413"/>
<dbReference type="PhosphoSitePlus" id="Q02413"/>
<dbReference type="SwissPalm" id="Q02413"/>
<dbReference type="BioMuta" id="DSG1"/>
<dbReference type="DMDM" id="292495005"/>
<dbReference type="jPOST" id="Q02413"/>
<dbReference type="MassIVE" id="Q02413"/>
<dbReference type="PaxDb" id="9606-ENSP00000257192"/>
<dbReference type="PeptideAtlas" id="Q02413"/>
<dbReference type="PRIDE" id="Q02413"/>
<dbReference type="ProteomicsDB" id="58089">
    <molecule id="Q02413-1"/>
</dbReference>
<dbReference type="ABCD" id="Q02413">
    <property type="antibodies" value="45 sequenced antibodies"/>
</dbReference>
<dbReference type="Antibodypedia" id="3998">
    <property type="antibodies" value="824 antibodies from 41 providers"/>
</dbReference>
<dbReference type="DNASU" id="1828"/>
<dbReference type="Ensembl" id="ENST00000257192.5">
    <molecule id="Q02413-1"/>
    <property type="protein sequence ID" value="ENSP00000257192.4"/>
    <property type="gene ID" value="ENSG00000134760.6"/>
</dbReference>
<dbReference type="GeneID" id="1828"/>
<dbReference type="KEGG" id="hsa:1828"/>
<dbReference type="MANE-Select" id="ENST00000257192.5">
    <property type="protein sequence ID" value="ENSP00000257192.4"/>
    <property type="RefSeq nucleotide sequence ID" value="NM_001942.4"/>
    <property type="RefSeq protein sequence ID" value="NP_001933.2"/>
</dbReference>
<dbReference type="UCSC" id="uc002kwp.4">
    <molecule id="Q02413-1"/>
    <property type="organism name" value="human"/>
</dbReference>
<dbReference type="AGR" id="HGNC:3048"/>
<dbReference type="CTD" id="1828"/>
<dbReference type="DisGeNET" id="1828"/>
<dbReference type="GeneCards" id="DSG1"/>
<dbReference type="HGNC" id="HGNC:3048">
    <property type="gene designation" value="DSG1"/>
</dbReference>
<dbReference type="HPA" id="ENSG00000134760">
    <property type="expression patterns" value="Tissue enriched (skin)"/>
</dbReference>
<dbReference type="MalaCards" id="DSG1"/>
<dbReference type="MIM" id="125670">
    <property type="type" value="gene"/>
</dbReference>
<dbReference type="MIM" id="148700">
    <property type="type" value="phenotype"/>
</dbReference>
<dbReference type="MIM" id="615508">
    <property type="type" value="phenotype"/>
</dbReference>
<dbReference type="neXtProt" id="NX_Q02413"/>
<dbReference type="OpenTargets" id="ENSG00000134760"/>
<dbReference type="Orphanet" id="369999">
    <property type="disease" value="Diffuse palmoplantar keratoderma with painful fissures"/>
</dbReference>
<dbReference type="Orphanet" id="370002">
    <property type="disease" value="Focal palmoplantar keratoderma with joint keratoses"/>
</dbReference>
<dbReference type="Orphanet" id="369992">
    <property type="disease" value="Severe dermatitis-multiple allergies-metabolic wasting syndrome"/>
</dbReference>
<dbReference type="Orphanet" id="50942">
    <property type="disease" value="Striate palmoplantar keratoderma"/>
</dbReference>
<dbReference type="PharmGKB" id="PA27501"/>
<dbReference type="VEuPathDB" id="HostDB:ENSG00000134760"/>
<dbReference type="eggNOG" id="KOG3594">
    <property type="taxonomic scope" value="Eukaryota"/>
</dbReference>
<dbReference type="GeneTree" id="ENSGT01030000234624"/>
<dbReference type="HOGENOM" id="CLU_005284_0_0_1"/>
<dbReference type="InParanoid" id="Q02413"/>
<dbReference type="OMA" id="VTKEQYN"/>
<dbReference type="OrthoDB" id="8961010at2759"/>
<dbReference type="PAN-GO" id="Q02413">
    <property type="GO annotations" value="4 GO annotations based on evolutionary models"/>
</dbReference>
<dbReference type="PhylomeDB" id="Q02413"/>
<dbReference type="TreeFam" id="TF331809"/>
<dbReference type="PathwayCommons" id="Q02413"/>
<dbReference type="Reactome" id="R-HSA-351906">
    <property type="pathway name" value="Apoptotic cleavage of cell adhesion proteins"/>
</dbReference>
<dbReference type="Reactome" id="R-HSA-6798695">
    <property type="pathway name" value="Neutrophil degranulation"/>
</dbReference>
<dbReference type="Reactome" id="R-HSA-6805567">
    <property type="pathway name" value="Keratinization"/>
</dbReference>
<dbReference type="Reactome" id="R-HSA-6809371">
    <property type="pathway name" value="Formation of the cornified envelope"/>
</dbReference>
<dbReference type="Reactome" id="R-HSA-9696264">
    <property type="pathway name" value="RND3 GTPase cycle"/>
</dbReference>
<dbReference type="Reactome" id="R-HSA-9696270">
    <property type="pathway name" value="RND2 GTPase cycle"/>
</dbReference>
<dbReference type="SignaLink" id="Q02413"/>
<dbReference type="BioGRID-ORCS" id="1828">
    <property type="hits" value="7 hits in 1150 CRISPR screens"/>
</dbReference>
<dbReference type="CD-CODE" id="232F8A39">
    <property type="entry name" value="P-body"/>
</dbReference>
<dbReference type="ChiTaRS" id="DSG1">
    <property type="organism name" value="human"/>
</dbReference>
<dbReference type="GeneWiki" id="Desmoglein_1"/>
<dbReference type="GenomeRNAi" id="1828"/>
<dbReference type="Pharos" id="Q02413">
    <property type="development level" value="Tbio"/>
</dbReference>
<dbReference type="PRO" id="PR:Q02413"/>
<dbReference type="Proteomes" id="UP000005640">
    <property type="component" value="Chromosome 18"/>
</dbReference>
<dbReference type="RNAct" id="Q02413">
    <property type="molecule type" value="protein"/>
</dbReference>
<dbReference type="Bgee" id="ENSG00000134760">
    <property type="expression patterns" value="Expressed in upper arm skin and 101 other cell types or tissues"/>
</dbReference>
<dbReference type="GO" id="GO:0016324">
    <property type="term" value="C:apical plasma membrane"/>
    <property type="evidence" value="ECO:0007669"/>
    <property type="project" value="Ensembl"/>
</dbReference>
<dbReference type="GO" id="GO:0001533">
    <property type="term" value="C:cornified envelope"/>
    <property type="evidence" value="ECO:0000304"/>
    <property type="project" value="Reactome"/>
</dbReference>
<dbReference type="GO" id="GO:0005737">
    <property type="term" value="C:cytoplasm"/>
    <property type="evidence" value="ECO:0000314"/>
    <property type="project" value="UniProtKB"/>
</dbReference>
<dbReference type="GO" id="GO:0009898">
    <property type="term" value="C:cytoplasmic side of plasma membrane"/>
    <property type="evidence" value="ECO:0000314"/>
    <property type="project" value="BHF-UCL"/>
</dbReference>
<dbReference type="GO" id="GO:0005829">
    <property type="term" value="C:cytosol"/>
    <property type="evidence" value="ECO:0000304"/>
    <property type="project" value="Reactome"/>
</dbReference>
<dbReference type="GO" id="GO:0030057">
    <property type="term" value="C:desmosome"/>
    <property type="evidence" value="ECO:0000314"/>
    <property type="project" value="UniProtKB"/>
</dbReference>
<dbReference type="GO" id="GO:0101003">
    <property type="term" value="C:ficolin-1-rich granule membrane"/>
    <property type="evidence" value="ECO:0000304"/>
    <property type="project" value="Reactome"/>
</dbReference>
<dbReference type="GO" id="GO:0016328">
    <property type="term" value="C:lateral plasma membrane"/>
    <property type="evidence" value="ECO:0007669"/>
    <property type="project" value="Ensembl"/>
</dbReference>
<dbReference type="GO" id="GO:0005634">
    <property type="term" value="C:nucleus"/>
    <property type="evidence" value="ECO:0000314"/>
    <property type="project" value="UniProtKB"/>
</dbReference>
<dbReference type="GO" id="GO:0005886">
    <property type="term" value="C:plasma membrane"/>
    <property type="evidence" value="ECO:0000304"/>
    <property type="project" value="Reactome"/>
</dbReference>
<dbReference type="GO" id="GO:0005509">
    <property type="term" value="F:calcium ion binding"/>
    <property type="evidence" value="ECO:0000318"/>
    <property type="project" value="GO_Central"/>
</dbReference>
<dbReference type="GO" id="GO:0045295">
    <property type="term" value="F:gamma-catenin binding"/>
    <property type="evidence" value="ECO:0000353"/>
    <property type="project" value="BHF-UCL"/>
</dbReference>
<dbReference type="GO" id="GO:0015643">
    <property type="term" value="F:toxic substance binding"/>
    <property type="evidence" value="ECO:0000303"/>
    <property type="project" value="UniProtKB"/>
</dbReference>
<dbReference type="GO" id="GO:0016339">
    <property type="term" value="P:calcium-dependent cell-cell adhesion via plasma membrane cell adhesion molecules"/>
    <property type="evidence" value="ECO:0000303"/>
    <property type="project" value="UniProtKB"/>
</dbReference>
<dbReference type="GO" id="GO:0098609">
    <property type="term" value="P:cell-cell adhesion"/>
    <property type="evidence" value="ECO:0000318"/>
    <property type="project" value="GO_Central"/>
</dbReference>
<dbReference type="GO" id="GO:0007043">
    <property type="term" value="P:cell-cell junction assembly"/>
    <property type="evidence" value="ECO:0000303"/>
    <property type="project" value="UniProtKB"/>
</dbReference>
<dbReference type="GO" id="GO:0007156">
    <property type="term" value="P:homophilic cell adhesion via plasma membrane adhesion molecules"/>
    <property type="evidence" value="ECO:0007669"/>
    <property type="project" value="InterPro"/>
</dbReference>
<dbReference type="GO" id="GO:0060135">
    <property type="term" value="P:maternal process involved in female pregnancy"/>
    <property type="evidence" value="ECO:0007669"/>
    <property type="project" value="Ensembl"/>
</dbReference>
<dbReference type="GO" id="GO:0050821">
    <property type="term" value="P:protein stabilization"/>
    <property type="evidence" value="ECO:0000314"/>
    <property type="project" value="BHF-UCL"/>
</dbReference>
<dbReference type="GO" id="GO:0032570">
    <property type="term" value="P:response to progesterone"/>
    <property type="evidence" value="ECO:0007669"/>
    <property type="project" value="Ensembl"/>
</dbReference>
<dbReference type="CDD" id="cd11304">
    <property type="entry name" value="Cadherin_repeat"/>
    <property type="match status" value="4"/>
</dbReference>
<dbReference type="DisProt" id="DP01476"/>
<dbReference type="FunFam" id="2.60.40.60:FF:000011">
    <property type="entry name" value="Cadherin 1"/>
    <property type="match status" value="1"/>
</dbReference>
<dbReference type="FunFam" id="2.60.40.60:FF:000068">
    <property type="entry name" value="Desmoglein 1"/>
    <property type="match status" value="1"/>
</dbReference>
<dbReference type="FunFam" id="2.60.40.60:FF:000083">
    <property type="entry name" value="Desmoglein 1"/>
    <property type="match status" value="1"/>
</dbReference>
<dbReference type="FunFam" id="2.60.40.60:FF:000238">
    <property type="entry name" value="Desmoglein 1"/>
    <property type="match status" value="1"/>
</dbReference>
<dbReference type="FunFam" id="4.10.900.10:FF:000003">
    <property type="entry name" value="Desmoglein 1"/>
    <property type="match status" value="1"/>
</dbReference>
<dbReference type="Gene3D" id="2.60.40.60">
    <property type="entry name" value="Cadherins"/>
    <property type="match status" value="4"/>
</dbReference>
<dbReference type="Gene3D" id="4.10.900.10">
    <property type="entry name" value="TCF3-CBD (Catenin binding domain)"/>
    <property type="match status" value="1"/>
</dbReference>
<dbReference type="InterPro" id="IPR050971">
    <property type="entry name" value="Cadherin-domain_protein"/>
</dbReference>
<dbReference type="InterPro" id="IPR002126">
    <property type="entry name" value="Cadherin-like_dom"/>
</dbReference>
<dbReference type="InterPro" id="IPR015919">
    <property type="entry name" value="Cadherin-like_sf"/>
</dbReference>
<dbReference type="InterPro" id="IPR020894">
    <property type="entry name" value="Cadherin_CS"/>
</dbReference>
<dbReference type="InterPro" id="IPR000233">
    <property type="entry name" value="Cadherin_Y-type_LIR"/>
</dbReference>
<dbReference type="InterPro" id="IPR027397">
    <property type="entry name" value="Catenin-bd_sf"/>
</dbReference>
<dbReference type="InterPro" id="IPR009122">
    <property type="entry name" value="Desmosomal_cadherin"/>
</dbReference>
<dbReference type="PANTHER" id="PTHR24025">
    <property type="entry name" value="DESMOGLEIN FAMILY MEMBER"/>
    <property type="match status" value="1"/>
</dbReference>
<dbReference type="PANTHER" id="PTHR24025:SF9">
    <property type="entry name" value="DESMOGLEIN-1"/>
    <property type="match status" value="1"/>
</dbReference>
<dbReference type="Pfam" id="PF01049">
    <property type="entry name" value="CADH_Y-type_LIR"/>
    <property type="match status" value="1"/>
</dbReference>
<dbReference type="Pfam" id="PF00028">
    <property type="entry name" value="Cadherin"/>
    <property type="match status" value="3"/>
</dbReference>
<dbReference type="PRINTS" id="PR00205">
    <property type="entry name" value="CADHERIN"/>
</dbReference>
<dbReference type="PRINTS" id="PR01818">
    <property type="entry name" value="DESMOCADHERN"/>
</dbReference>
<dbReference type="PRINTS" id="PR01819">
    <property type="entry name" value="DESMOGLEIN"/>
</dbReference>
<dbReference type="SMART" id="SM00112">
    <property type="entry name" value="CA"/>
    <property type="match status" value="4"/>
</dbReference>
<dbReference type="SUPFAM" id="SSF49313">
    <property type="entry name" value="Cadherin-like"/>
    <property type="match status" value="4"/>
</dbReference>
<dbReference type="PROSITE" id="PS00232">
    <property type="entry name" value="CADHERIN_1"/>
    <property type="match status" value="2"/>
</dbReference>
<dbReference type="PROSITE" id="PS50268">
    <property type="entry name" value="CADHERIN_2"/>
    <property type="match status" value="4"/>
</dbReference>
<proteinExistence type="evidence at protein level"/>
<name>DSG1_HUMAN</name>